<dbReference type="EC" id="4.2.1.11" evidence="1"/>
<dbReference type="EMBL" id="CP001022">
    <property type="protein sequence ID" value="ACB61843.1"/>
    <property type="molecule type" value="Genomic_DNA"/>
</dbReference>
<dbReference type="RefSeq" id="WP_012371259.1">
    <property type="nucleotide sequence ID" value="NC_010556.1"/>
</dbReference>
<dbReference type="SMR" id="B1YLD8"/>
<dbReference type="STRING" id="262543.Exig_2393"/>
<dbReference type="KEGG" id="esi:Exig_2393"/>
<dbReference type="eggNOG" id="COG0148">
    <property type="taxonomic scope" value="Bacteria"/>
</dbReference>
<dbReference type="HOGENOM" id="CLU_031223_2_1_9"/>
<dbReference type="OrthoDB" id="9804716at2"/>
<dbReference type="UniPathway" id="UPA00109">
    <property type="reaction ID" value="UER00187"/>
</dbReference>
<dbReference type="Proteomes" id="UP000001681">
    <property type="component" value="Chromosome"/>
</dbReference>
<dbReference type="GO" id="GO:0009986">
    <property type="term" value="C:cell surface"/>
    <property type="evidence" value="ECO:0007669"/>
    <property type="project" value="UniProtKB-SubCell"/>
</dbReference>
<dbReference type="GO" id="GO:0005576">
    <property type="term" value="C:extracellular region"/>
    <property type="evidence" value="ECO:0007669"/>
    <property type="project" value="UniProtKB-SubCell"/>
</dbReference>
<dbReference type="GO" id="GO:0000015">
    <property type="term" value="C:phosphopyruvate hydratase complex"/>
    <property type="evidence" value="ECO:0007669"/>
    <property type="project" value="InterPro"/>
</dbReference>
<dbReference type="GO" id="GO:0000287">
    <property type="term" value="F:magnesium ion binding"/>
    <property type="evidence" value="ECO:0007669"/>
    <property type="project" value="UniProtKB-UniRule"/>
</dbReference>
<dbReference type="GO" id="GO:0004634">
    <property type="term" value="F:phosphopyruvate hydratase activity"/>
    <property type="evidence" value="ECO:0007669"/>
    <property type="project" value="UniProtKB-UniRule"/>
</dbReference>
<dbReference type="GO" id="GO:0006096">
    <property type="term" value="P:glycolytic process"/>
    <property type="evidence" value="ECO:0007669"/>
    <property type="project" value="UniProtKB-UniRule"/>
</dbReference>
<dbReference type="CDD" id="cd03313">
    <property type="entry name" value="enolase"/>
    <property type="match status" value="1"/>
</dbReference>
<dbReference type="FunFam" id="3.20.20.120:FF:000001">
    <property type="entry name" value="Enolase"/>
    <property type="match status" value="1"/>
</dbReference>
<dbReference type="FunFam" id="3.30.390.10:FF:000001">
    <property type="entry name" value="Enolase"/>
    <property type="match status" value="1"/>
</dbReference>
<dbReference type="Gene3D" id="3.20.20.120">
    <property type="entry name" value="Enolase-like C-terminal domain"/>
    <property type="match status" value="1"/>
</dbReference>
<dbReference type="Gene3D" id="3.30.390.10">
    <property type="entry name" value="Enolase-like, N-terminal domain"/>
    <property type="match status" value="1"/>
</dbReference>
<dbReference type="HAMAP" id="MF_00318">
    <property type="entry name" value="Enolase"/>
    <property type="match status" value="1"/>
</dbReference>
<dbReference type="InterPro" id="IPR000941">
    <property type="entry name" value="Enolase"/>
</dbReference>
<dbReference type="InterPro" id="IPR036849">
    <property type="entry name" value="Enolase-like_C_sf"/>
</dbReference>
<dbReference type="InterPro" id="IPR029017">
    <property type="entry name" value="Enolase-like_N"/>
</dbReference>
<dbReference type="InterPro" id="IPR020810">
    <property type="entry name" value="Enolase_C"/>
</dbReference>
<dbReference type="InterPro" id="IPR020809">
    <property type="entry name" value="Enolase_CS"/>
</dbReference>
<dbReference type="InterPro" id="IPR020811">
    <property type="entry name" value="Enolase_N"/>
</dbReference>
<dbReference type="NCBIfam" id="TIGR01060">
    <property type="entry name" value="eno"/>
    <property type="match status" value="1"/>
</dbReference>
<dbReference type="PANTHER" id="PTHR11902">
    <property type="entry name" value="ENOLASE"/>
    <property type="match status" value="1"/>
</dbReference>
<dbReference type="PANTHER" id="PTHR11902:SF1">
    <property type="entry name" value="ENOLASE"/>
    <property type="match status" value="1"/>
</dbReference>
<dbReference type="Pfam" id="PF00113">
    <property type="entry name" value="Enolase_C"/>
    <property type="match status" value="1"/>
</dbReference>
<dbReference type="Pfam" id="PF03952">
    <property type="entry name" value="Enolase_N"/>
    <property type="match status" value="1"/>
</dbReference>
<dbReference type="PIRSF" id="PIRSF001400">
    <property type="entry name" value="Enolase"/>
    <property type="match status" value="1"/>
</dbReference>
<dbReference type="PRINTS" id="PR00148">
    <property type="entry name" value="ENOLASE"/>
</dbReference>
<dbReference type="SFLD" id="SFLDS00001">
    <property type="entry name" value="Enolase"/>
    <property type="match status" value="1"/>
</dbReference>
<dbReference type="SFLD" id="SFLDF00002">
    <property type="entry name" value="enolase"/>
    <property type="match status" value="1"/>
</dbReference>
<dbReference type="SMART" id="SM01192">
    <property type="entry name" value="Enolase_C"/>
    <property type="match status" value="1"/>
</dbReference>
<dbReference type="SMART" id="SM01193">
    <property type="entry name" value="Enolase_N"/>
    <property type="match status" value="1"/>
</dbReference>
<dbReference type="SUPFAM" id="SSF51604">
    <property type="entry name" value="Enolase C-terminal domain-like"/>
    <property type="match status" value="1"/>
</dbReference>
<dbReference type="SUPFAM" id="SSF54826">
    <property type="entry name" value="Enolase N-terminal domain-like"/>
    <property type="match status" value="1"/>
</dbReference>
<dbReference type="PROSITE" id="PS00164">
    <property type="entry name" value="ENOLASE"/>
    <property type="match status" value="1"/>
</dbReference>
<gene>
    <name evidence="1" type="primary">eno</name>
    <name type="ordered locus">Exig_2393</name>
</gene>
<organism>
    <name type="scientific">Exiguobacterium sibiricum (strain DSM 17290 / CCUG 55495 / CIP 109462 / JCM 13490 / 255-15)</name>
    <dbReference type="NCBI Taxonomy" id="262543"/>
    <lineage>
        <taxon>Bacteria</taxon>
        <taxon>Bacillati</taxon>
        <taxon>Bacillota</taxon>
        <taxon>Bacilli</taxon>
        <taxon>Bacillales</taxon>
        <taxon>Bacillales Family XII. Incertae Sedis</taxon>
        <taxon>Exiguobacterium</taxon>
    </lineage>
</organism>
<comment type="function">
    <text evidence="1">Catalyzes the reversible conversion of 2-phosphoglycerate (2-PG) into phosphoenolpyruvate (PEP). It is essential for the degradation of carbohydrates via glycolysis.</text>
</comment>
<comment type="catalytic activity">
    <reaction evidence="1">
        <text>(2R)-2-phosphoglycerate = phosphoenolpyruvate + H2O</text>
        <dbReference type="Rhea" id="RHEA:10164"/>
        <dbReference type="ChEBI" id="CHEBI:15377"/>
        <dbReference type="ChEBI" id="CHEBI:58289"/>
        <dbReference type="ChEBI" id="CHEBI:58702"/>
        <dbReference type="EC" id="4.2.1.11"/>
    </reaction>
</comment>
<comment type="cofactor">
    <cofactor evidence="1">
        <name>Mg(2+)</name>
        <dbReference type="ChEBI" id="CHEBI:18420"/>
    </cofactor>
    <text evidence="1">Binds a second Mg(2+) ion via substrate during catalysis.</text>
</comment>
<comment type="pathway">
    <text evidence="1">Carbohydrate degradation; glycolysis; pyruvate from D-glyceraldehyde 3-phosphate: step 4/5.</text>
</comment>
<comment type="subcellular location">
    <subcellularLocation>
        <location evidence="1">Cytoplasm</location>
    </subcellularLocation>
    <subcellularLocation>
        <location evidence="1">Secreted</location>
    </subcellularLocation>
    <subcellularLocation>
        <location evidence="1">Cell surface</location>
    </subcellularLocation>
    <text evidence="1">Fractions of enolase are present in both the cytoplasm and on the cell surface.</text>
</comment>
<comment type="similarity">
    <text evidence="1">Belongs to the enolase family.</text>
</comment>
<proteinExistence type="inferred from homology"/>
<accession>B1YLD8</accession>
<protein>
    <recommendedName>
        <fullName evidence="1">Enolase</fullName>
        <ecNumber evidence="1">4.2.1.11</ecNumber>
    </recommendedName>
    <alternativeName>
        <fullName evidence="1">2-phospho-D-glycerate hydro-lyase</fullName>
    </alternativeName>
    <alternativeName>
        <fullName evidence="1">2-phosphoglycerate dehydratase</fullName>
    </alternativeName>
</protein>
<keyword id="KW-0963">Cytoplasm</keyword>
<keyword id="KW-0324">Glycolysis</keyword>
<keyword id="KW-0456">Lyase</keyword>
<keyword id="KW-0460">Magnesium</keyword>
<keyword id="KW-0479">Metal-binding</keyword>
<keyword id="KW-1185">Reference proteome</keyword>
<keyword id="KW-0964">Secreted</keyword>
<feature type="chain" id="PRO_1000115864" description="Enolase">
    <location>
        <begin position="1"/>
        <end position="430"/>
    </location>
</feature>
<feature type="active site" description="Proton donor" evidence="1">
    <location>
        <position position="205"/>
    </location>
</feature>
<feature type="active site" description="Proton acceptor" evidence="1">
    <location>
        <position position="339"/>
    </location>
</feature>
<feature type="binding site" evidence="1">
    <location>
        <position position="163"/>
    </location>
    <ligand>
        <name>(2R)-2-phosphoglycerate</name>
        <dbReference type="ChEBI" id="CHEBI:58289"/>
    </ligand>
</feature>
<feature type="binding site" evidence="1">
    <location>
        <position position="242"/>
    </location>
    <ligand>
        <name>Mg(2+)</name>
        <dbReference type="ChEBI" id="CHEBI:18420"/>
    </ligand>
</feature>
<feature type="binding site" evidence="1">
    <location>
        <position position="287"/>
    </location>
    <ligand>
        <name>Mg(2+)</name>
        <dbReference type="ChEBI" id="CHEBI:18420"/>
    </ligand>
</feature>
<feature type="binding site" evidence="1">
    <location>
        <position position="314"/>
    </location>
    <ligand>
        <name>Mg(2+)</name>
        <dbReference type="ChEBI" id="CHEBI:18420"/>
    </ligand>
</feature>
<feature type="binding site" evidence="1">
    <location>
        <position position="339"/>
    </location>
    <ligand>
        <name>(2R)-2-phosphoglycerate</name>
        <dbReference type="ChEBI" id="CHEBI:58289"/>
    </ligand>
</feature>
<feature type="binding site" evidence="1">
    <location>
        <position position="368"/>
    </location>
    <ligand>
        <name>(2R)-2-phosphoglycerate</name>
        <dbReference type="ChEBI" id="CHEBI:58289"/>
    </ligand>
</feature>
<feature type="binding site" evidence="1">
    <location>
        <position position="369"/>
    </location>
    <ligand>
        <name>(2R)-2-phosphoglycerate</name>
        <dbReference type="ChEBI" id="CHEBI:58289"/>
    </ligand>
</feature>
<feature type="binding site" evidence="1">
    <location>
        <position position="390"/>
    </location>
    <ligand>
        <name>(2R)-2-phosphoglycerate</name>
        <dbReference type="ChEBI" id="CHEBI:58289"/>
    </ligand>
</feature>
<evidence type="ECO:0000255" key="1">
    <source>
        <dbReference type="HAMAP-Rule" id="MF_00318"/>
    </source>
</evidence>
<name>ENO_EXIS2</name>
<sequence length="430" mass="46328">MSMITEIYAREILDSRGNPTVEVEVYTEDGGFGRALVPSGASTGEHEAVELRDGDKSRYLGKGVLKAVDNVNEKLAPEIIGYDVFDQAGIDKKMIDLDGTKNKGNFGANAILGISMAAARAAADELGLPLYTYLGGFNAKTLPTPMMNIINGGSHADNNVDFQEFMIMPVGAPTFKEALRMGAEIFHALKSVLSGMGLNTAVGDEGGFAPNLKSNEEAITVILEAIEKAGYKAGEDVYLAMDVASSEFYDKAAGKYNLAGEGKVLSTEELVEFYAQLVDKYPIISIEDGCDENDWDGHKLLTDRIGHKVQLVGDDLFVTNTEKLAEGIEKGIANSILIKVNQIGTLTETFDAIEMAKKAGYTAVVSHRSGETEDSTIADIAVATNAGQIKTGSLSRTDRIAKYNQLLRIEDMLSDVAVYDGIKSFYNLKK</sequence>
<reference key="1">
    <citation type="submission" date="2008-04" db="EMBL/GenBank/DDBJ databases">
        <title>Complete sequence of chromosome of Exiguobacterium sibiricum 255-15.</title>
        <authorList>
            <consortium name="US DOE Joint Genome Institute"/>
            <person name="Copeland A."/>
            <person name="Lucas S."/>
            <person name="Lapidus A."/>
            <person name="Glavina del Rio T."/>
            <person name="Dalin E."/>
            <person name="Tice H."/>
            <person name="Bruce D."/>
            <person name="Goodwin L."/>
            <person name="Pitluck S."/>
            <person name="Kiss H."/>
            <person name="Chertkov O."/>
            <person name="Monk C."/>
            <person name="Brettin T."/>
            <person name="Detter J.C."/>
            <person name="Han C."/>
            <person name="Kuske C.R."/>
            <person name="Schmutz J."/>
            <person name="Larimer F."/>
            <person name="Land M."/>
            <person name="Hauser L."/>
            <person name="Kyrpides N."/>
            <person name="Mikhailova N."/>
            <person name="Vishnivetskaya T."/>
            <person name="Rodrigues D.F."/>
            <person name="Gilichinsky D."/>
            <person name="Tiedje J."/>
            <person name="Richardson P."/>
        </authorList>
    </citation>
    <scope>NUCLEOTIDE SEQUENCE [LARGE SCALE GENOMIC DNA]</scope>
    <source>
        <strain>DSM 17290 / CCUG 55495 / CIP 109462 / JCM 13490 / 255-15</strain>
    </source>
</reference>